<name>CLCN3_PONAB</name>
<feature type="chain" id="PRO_0000094440" description="H(+)/Cl(-) exchange transporter 3">
    <location>
        <begin position="1"/>
        <end position="801"/>
    </location>
</feature>
<feature type="topological domain" description="Cytoplasmic" evidence="2">
    <location>
        <begin position="1"/>
        <end position="125"/>
    </location>
</feature>
<feature type="transmembrane region" description="Helical" evidence="2">
    <location>
        <begin position="126"/>
        <end position="163"/>
    </location>
</feature>
<feature type="transmembrane region" description="Helical" evidence="2">
    <location>
        <begin position="209"/>
        <end position="232"/>
    </location>
</feature>
<feature type="intramembrane region" description="Helical" evidence="2">
    <location>
        <begin position="241"/>
        <end position="248"/>
    </location>
</feature>
<feature type="transmembrane region" description="Helical" evidence="2">
    <location>
        <begin position="258"/>
        <end position="276"/>
    </location>
</feature>
<feature type="transmembrane region" description="Helical" evidence="2">
    <location>
        <begin position="282"/>
        <end position="301"/>
    </location>
</feature>
<feature type="intramembrane region" description="Helical" evidence="2">
    <location>
        <begin position="313"/>
        <end position="325"/>
    </location>
</feature>
<feature type="intramembrane region" description="Helical" evidence="2">
    <location>
        <begin position="329"/>
        <end position="337"/>
    </location>
</feature>
<feature type="transmembrane region" description="Helical" evidence="2">
    <location>
        <begin position="349"/>
        <end position="367"/>
    </location>
</feature>
<feature type="transmembrane region" description="Helical" evidence="2">
    <location>
        <begin position="391"/>
        <end position="416"/>
    </location>
</feature>
<feature type="transmembrane region" description="Helical" evidence="2">
    <location>
        <begin position="423"/>
        <end position="443"/>
    </location>
</feature>
<feature type="transmembrane region" description="Helical" evidence="2">
    <location>
        <begin position="500"/>
        <end position="520"/>
    </location>
</feature>
<feature type="intramembrane region" description="Helical" evidence="2">
    <location>
        <begin position="555"/>
        <end position="569"/>
    </location>
</feature>
<feature type="intramembrane region" description="Helical" evidence="2">
    <location>
        <begin position="573"/>
        <end position="584"/>
    </location>
</feature>
<feature type="intramembrane region" description="Note=Loop between two helices" evidence="2">
    <location>
        <begin position="585"/>
        <end position="588"/>
    </location>
</feature>
<feature type="transmembrane region" description="Helical" evidence="2">
    <location>
        <begin position="589"/>
        <end position="607"/>
    </location>
</feature>
<feature type="topological domain" description="Cytoplasmic" evidence="2">
    <location>
        <begin position="608"/>
        <end position="801"/>
    </location>
</feature>
<feature type="domain" description="CBS 1" evidence="7">
    <location>
        <begin position="641"/>
        <end position="705"/>
    </location>
</feature>
<feature type="domain" description="CBS 2" evidence="7">
    <location>
        <begin position="738"/>
        <end position="795"/>
    </location>
</feature>
<feature type="short sequence motif" description="Di-leucine internalization motif; mediates targeting to late endosome and lysosome membranes" evidence="4">
    <location>
        <begin position="28"/>
        <end position="29"/>
    </location>
</feature>
<feature type="short sequence motif" description="Di-leucine internalization motif; mediates targeting to late endosome and lysosome membranes" evidence="4">
    <location>
        <begin position="46"/>
        <end position="47"/>
    </location>
</feature>
<feature type="short sequence motif" description="Di-leucine internalization motif; mediates targeting to late endosome and lysosome membranes" evidence="4">
    <location>
        <begin position="71"/>
        <end position="75"/>
    </location>
</feature>
<feature type="short sequence motif" description="Selectivity filter part_1" evidence="1">
    <location>
        <begin position="238"/>
        <end position="242"/>
    </location>
</feature>
<feature type="short sequence motif" description="Selectivity filter part_2" evidence="1">
    <location>
        <begin position="280"/>
        <end position="284"/>
    </location>
</feature>
<feature type="short sequence motif" description="Selectivity filter part_3" evidence="1">
    <location>
        <begin position="525"/>
        <end position="529"/>
    </location>
</feature>
<feature type="binding site" evidence="1">
    <location>
        <position position="239"/>
    </location>
    <ligand>
        <name>chloride</name>
        <dbReference type="ChEBI" id="CHEBI:17996"/>
    </ligand>
</feature>
<feature type="binding site" evidence="1">
    <location>
        <position position="527"/>
    </location>
    <ligand>
        <name>chloride</name>
        <dbReference type="ChEBI" id="CHEBI:17996"/>
    </ligand>
</feature>
<feature type="binding site" evidence="1">
    <location>
        <position position="613"/>
    </location>
    <ligand>
        <name>chloride</name>
        <dbReference type="ChEBI" id="CHEBI:17996"/>
    </ligand>
</feature>
<feature type="binding site" evidence="1">
    <location>
        <begin position="672"/>
        <end position="674"/>
    </location>
    <ligand>
        <name>ATP</name>
        <dbReference type="ChEBI" id="CHEBI:30616"/>
    </ligand>
</feature>
<feature type="binding site" evidence="1">
    <location>
        <begin position="779"/>
        <end position="782"/>
    </location>
    <ligand>
        <name>ATP</name>
        <dbReference type="ChEBI" id="CHEBI:30616"/>
    </ligand>
</feature>
<feature type="site" description="Mediates proton transfer from the outer aqueous phase to the interior of the protein; involved in linking H(+) and Cl(-) transport" evidence="1">
    <location>
        <position position="282"/>
    </location>
</feature>
<feature type="site" description="Mediates proton transfer from the protein to the inner aqueous phase" evidence="1">
    <location>
        <position position="339"/>
    </location>
</feature>
<feature type="glycosylation site" description="N-linked (GlcNAc...) asparagine" evidence="6">
    <location>
        <position position="177"/>
    </location>
</feature>
<feature type="glycosylation site" description="N-linked (GlcNAc...) asparagine" evidence="6">
    <location>
        <position position="451"/>
    </location>
</feature>
<feature type="glycosylation site" description="N-linked (GlcNAc...) asparagine" evidence="6">
    <location>
        <position position="479"/>
    </location>
</feature>
<reference key="1">
    <citation type="submission" date="2004-11" db="EMBL/GenBank/DDBJ databases">
        <authorList>
            <consortium name="The German cDNA consortium"/>
        </authorList>
    </citation>
    <scope>NUCLEOTIDE SEQUENCE [LARGE SCALE MRNA]</scope>
    <source>
        <tissue>Brain cortex</tissue>
    </source>
</reference>
<keyword id="KW-0050">Antiport</keyword>
<keyword id="KW-0067">ATP-binding</keyword>
<keyword id="KW-0129">CBS domain</keyword>
<keyword id="KW-1003">Cell membrane</keyword>
<keyword id="KW-0868">Chloride</keyword>
<keyword id="KW-0967">Endosome</keyword>
<keyword id="KW-0325">Glycoprotein</keyword>
<keyword id="KW-0406">Ion transport</keyword>
<keyword id="KW-0458">Lysosome</keyword>
<keyword id="KW-0472">Membrane</keyword>
<keyword id="KW-0547">Nucleotide-binding</keyword>
<keyword id="KW-1185">Reference proteome</keyword>
<keyword id="KW-0677">Repeat</keyword>
<keyword id="KW-0812">Transmembrane</keyword>
<keyword id="KW-1133">Transmembrane helix</keyword>
<keyword id="KW-0813">Transport</keyword>
<sequence length="801" mass="89319">MESEQLFHRGYYRNSYNSITSASSDEELLDGAGVIMDFQTSEDDNLLDGDTAVGTHYTMTNGGSINSSTHLLDLLDEPIPGVGTYDDFHTIDWVREKCKDRERHRRINSKKKESAWEMTKSLYDAWSGWLVVTLTGLASGALAGLIDIAADWMTDLKEGICLSALWYNHEQCCWGSNETTFEERDKCPQWKTWAELIIGQAEGPGSYIMNYIMYIFWALSFAFLAVSLVKVFAPYACGSGIPEIKTILSGFIIRGYLGKWTLMIKTVTLVLAVASGLSLGKEGPLVHVACCCGNIFSYLFPKYSTNEAKKREVLSAASAAGVSVAFGAPIGGVLFSLEEVSYYFPLKTLWRSFFAALVAAFVLRSINPFGNSRLVLFYVEYHTPWYLFELFPFILLGVFGGLWGAFFIRANIAWCRRRKSTKFGKYPVLEVIIVAAITAVIAFPNPYTRLNTSELIKELFTDCGPLESSSLCDYRNDMNASKIVDDIPDRPAGIGVYSAIWQLCLALIFKIIMTVFTFGIKVPSGLFIPSMAYYHHDWFIFKEWCEVGADCITPGLYAMVGAAACLGGVTRMTVSLVVIVFELTGGLEYIVPLMAAVMTSKWVGDAFGREGIYEAHIRLNGYPFLDAKEEFTHTTLAADVMRPRRNDPPLAVLTQDNMTVDDIENMINETSYNGFPVIMSKESQRLVGFALRRDLTIAIESARKKQEGIVGSSRVCFAQHTPSLPAESPRPLKLRSILDMSPFTVTDHTPMEIVVDIFRKLGLRQCLVTHNGRLLGIITKKDILRHMAQTANQDPASIMFN</sequence>
<evidence type="ECO:0000250" key="1"/>
<evidence type="ECO:0000250" key="2">
    <source>
        <dbReference type="UniProtKB" id="P35523"/>
    </source>
</evidence>
<evidence type="ECO:0000250" key="3">
    <source>
        <dbReference type="UniProtKB" id="P51790"/>
    </source>
</evidence>
<evidence type="ECO:0000250" key="4">
    <source>
        <dbReference type="UniProtKB" id="P51791"/>
    </source>
</evidence>
<evidence type="ECO:0000250" key="5">
    <source>
        <dbReference type="UniProtKB" id="P51792"/>
    </source>
</evidence>
<evidence type="ECO:0000255" key="6"/>
<evidence type="ECO:0000255" key="7">
    <source>
        <dbReference type="PROSITE-ProRule" id="PRU00703"/>
    </source>
</evidence>
<evidence type="ECO:0000305" key="8"/>
<dbReference type="EMBL" id="CR857911">
    <property type="protein sequence ID" value="CAH90160.1"/>
    <property type="molecule type" value="mRNA"/>
</dbReference>
<dbReference type="RefSeq" id="NP_001127245.1">
    <property type="nucleotide sequence ID" value="NM_001133773.1"/>
</dbReference>
<dbReference type="SMR" id="Q5RDJ7"/>
<dbReference type="STRING" id="9601.ENSPPYP00000016975"/>
<dbReference type="GlyCosmos" id="Q5RDJ7">
    <property type="glycosylation" value="3 sites, No reported glycans"/>
</dbReference>
<dbReference type="GeneID" id="100174300"/>
<dbReference type="KEGG" id="pon:100174300"/>
<dbReference type="CTD" id="1182"/>
<dbReference type="eggNOG" id="KOG0475">
    <property type="taxonomic scope" value="Eukaryota"/>
</dbReference>
<dbReference type="InParanoid" id="Q5RDJ7"/>
<dbReference type="OrthoDB" id="44789at2759"/>
<dbReference type="Proteomes" id="UP000001595">
    <property type="component" value="Unplaced"/>
</dbReference>
<dbReference type="GO" id="GO:0005769">
    <property type="term" value="C:early endosome"/>
    <property type="evidence" value="ECO:0000250"/>
    <property type="project" value="UniProtKB"/>
</dbReference>
<dbReference type="GO" id="GO:0031901">
    <property type="term" value="C:early endosome membrane"/>
    <property type="evidence" value="ECO:0007669"/>
    <property type="project" value="UniProtKB-SubCell"/>
</dbReference>
<dbReference type="GO" id="GO:0010008">
    <property type="term" value="C:endosome membrane"/>
    <property type="evidence" value="ECO:0000250"/>
    <property type="project" value="UniProtKB"/>
</dbReference>
<dbReference type="GO" id="GO:0005794">
    <property type="term" value="C:Golgi apparatus"/>
    <property type="evidence" value="ECO:0000250"/>
    <property type="project" value="UniProtKB"/>
</dbReference>
<dbReference type="GO" id="GO:0005770">
    <property type="term" value="C:late endosome"/>
    <property type="evidence" value="ECO:0000250"/>
    <property type="project" value="UniProtKB"/>
</dbReference>
<dbReference type="GO" id="GO:0031902">
    <property type="term" value="C:late endosome membrane"/>
    <property type="evidence" value="ECO:0007669"/>
    <property type="project" value="UniProtKB-SubCell"/>
</dbReference>
<dbReference type="GO" id="GO:0005765">
    <property type="term" value="C:lysosomal membrane"/>
    <property type="evidence" value="ECO:0000250"/>
    <property type="project" value="UniProtKB"/>
</dbReference>
<dbReference type="GO" id="GO:0005886">
    <property type="term" value="C:plasma membrane"/>
    <property type="evidence" value="ECO:0007669"/>
    <property type="project" value="UniProtKB-SubCell"/>
</dbReference>
<dbReference type="GO" id="GO:0055037">
    <property type="term" value="C:recycling endosome"/>
    <property type="evidence" value="ECO:0000250"/>
    <property type="project" value="UniProtKB"/>
</dbReference>
<dbReference type="GO" id="GO:0008021">
    <property type="term" value="C:synaptic vesicle"/>
    <property type="evidence" value="ECO:0007669"/>
    <property type="project" value="TreeGrafter"/>
</dbReference>
<dbReference type="GO" id="GO:0012506">
    <property type="term" value="C:vesicle membrane"/>
    <property type="evidence" value="ECO:0000250"/>
    <property type="project" value="UniProtKB"/>
</dbReference>
<dbReference type="GO" id="GO:0015297">
    <property type="term" value="F:antiporter activity"/>
    <property type="evidence" value="ECO:0000250"/>
    <property type="project" value="UniProtKB"/>
</dbReference>
<dbReference type="GO" id="GO:0005524">
    <property type="term" value="F:ATP binding"/>
    <property type="evidence" value="ECO:0007669"/>
    <property type="project" value="UniProtKB-KW"/>
</dbReference>
<dbReference type="GO" id="GO:0062158">
    <property type="term" value="F:chloride:proton antiporter activity"/>
    <property type="evidence" value="ECO:0007669"/>
    <property type="project" value="InterPro"/>
</dbReference>
<dbReference type="GO" id="GO:0030165">
    <property type="term" value="F:PDZ domain binding"/>
    <property type="evidence" value="ECO:0000250"/>
    <property type="project" value="UniProtKB"/>
</dbReference>
<dbReference type="GO" id="GO:0005247">
    <property type="term" value="F:voltage-gated chloride channel activity"/>
    <property type="evidence" value="ECO:0000250"/>
    <property type="project" value="UniProtKB"/>
</dbReference>
<dbReference type="CDD" id="cd04591">
    <property type="entry name" value="CBS_pair_voltage-gated_CLC_euk_bac"/>
    <property type="match status" value="1"/>
</dbReference>
<dbReference type="CDD" id="cd03684">
    <property type="entry name" value="ClC_3_like"/>
    <property type="match status" value="1"/>
</dbReference>
<dbReference type="FunFam" id="3.90.1280.20:FF:000001">
    <property type="entry name" value="Chloride channel protein"/>
    <property type="match status" value="1"/>
</dbReference>
<dbReference type="FunFam" id="3.90.1280.20:FF:000002">
    <property type="entry name" value="Chloride channel protein"/>
    <property type="match status" value="1"/>
</dbReference>
<dbReference type="Gene3D" id="3.90.1280.20">
    <property type="match status" value="2"/>
</dbReference>
<dbReference type="Gene3D" id="1.10.3080.10">
    <property type="entry name" value="Clc chloride channel"/>
    <property type="match status" value="1"/>
</dbReference>
<dbReference type="InterPro" id="IPR000644">
    <property type="entry name" value="CBS_dom"/>
</dbReference>
<dbReference type="InterPro" id="IPR046342">
    <property type="entry name" value="CBS_dom_sf"/>
</dbReference>
<dbReference type="InterPro" id="IPR014743">
    <property type="entry name" value="Cl-channel_core"/>
</dbReference>
<dbReference type="InterPro" id="IPR001807">
    <property type="entry name" value="ClC"/>
</dbReference>
<dbReference type="InterPro" id="IPR002245">
    <property type="entry name" value="ClC3"/>
</dbReference>
<dbReference type="PANTHER" id="PTHR45711">
    <property type="entry name" value="CHLORIDE CHANNEL PROTEIN"/>
    <property type="match status" value="1"/>
</dbReference>
<dbReference type="PANTHER" id="PTHR45711:SF8">
    <property type="entry name" value="H(+)_CL(-) EXCHANGE TRANSPORTER 3"/>
    <property type="match status" value="1"/>
</dbReference>
<dbReference type="Pfam" id="PF00571">
    <property type="entry name" value="CBS"/>
    <property type="match status" value="1"/>
</dbReference>
<dbReference type="Pfam" id="PF00654">
    <property type="entry name" value="Voltage_CLC"/>
    <property type="match status" value="1"/>
</dbReference>
<dbReference type="PRINTS" id="PR00762">
    <property type="entry name" value="CLCHANNEL"/>
</dbReference>
<dbReference type="PRINTS" id="PR01114">
    <property type="entry name" value="CLCHANNEL3"/>
</dbReference>
<dbReference type="SMART" id="SM00116">
    <property type="entry name" value="CBS"/>
    <property type="match status" value="2"/>
</dbReference>
<dbReference type="SUPFAM" id="SSF54631">
    <property type="entry name" value="CBS-domain pair"/>
    <property type="match status" value="1"/>
</dbReference>
<dbReference type="SUPFAM" id="SSF81340">
    <property type="entry name" value="Clc chloride channel"/>
    <property type="match status" value="1"/>
</dbReference>
<dbReference type="PROSITE" id="PS51371">
    <property type="entry name" value="CBS"/>
    <property type="match status" value="2"/>
</dbReference>
<proteinExistence type="evidence at transcript level"/>
<comment type="function">
    <text evidence="3 4">Strongly outwardly rectifying, electrogenic H(+)/Cl(-)exchanger which mediates the exchange of chloride ions against protons (By similarity). The CLC channel family contains both chloride channels and proton-coupled anion transporters that exchange chloride or another anion for protons (By similarity). The presence of conserved gating glutamate residues is typical for family members that function as antiporters (By similarity).</text>
</comment>
<comment type="subunit">
    <text evidence="4">Monomer and homodimer (By similarity). Forms heterodimers with CLCN4 (By similarity).</text>
</comment>
<comment type="subcellular location">
    <subcellularLocation>
        <location evidence="3">Early endosome membrane</location>
        <topology evidence="6">Multi-pass membrane protein</topology>
    </subcellularLocation>
    <subcellularLocation>
        <location evidence="3">Late endosome membrane</location>
        <topology evidence="6">Multi-pass membrane protein</topology>
    </subcellularLocation>
    <subcellularLocation>
        <location evidence="4">Lysosome membrane</location>
        <topology evidence="6">Multi-pass membrane protein</topology>
    </subcellularLocation>
    <subcellularLocation>
        <location evidence="5">Cell membrane</location>
        <topology evidence="6">Multi-pass membrane protein</topology>
    </subcellularLocation>
</comment>
<comment type="PTM">
    <text evidence="3">N-glycosylated.</text>
</comment>
<comment type="similarity">
    <text evidence="8">Belongs to the chloride channel (TC 2.A.49) family. ClC-3/CLCN3 subfamily.</text>
</comment>
<protein>
    <recommendedName>
        <fullName>H(+)/Cl(-) exchange transporter 3</fullName>
    </recommendedName>
    <alternativeName>
        <fullName>Chloride channel protein 3</fullName>
        <shortName>ClC-3</shortName>
    </alternativeName>
    <alternativeName>
        <fullName>Chloride transporter ClC-3</fullName>
    </alternativeName>
</protein>
<gene>
    <name type="primary">CLCN3</name>
</gene>
<organism>
    <name type="scientific">Pongo abelii</name>
    <name type="common">Sumatran orangutan</name>
    <name type="synonym">Pongo pygmaeus abelii</name>
    <dbReference type="NCBI Taxonomy" id="9601"/>
    <lineage>
        <taxon>Eukaryota</taxon>
        <taxon>Metazoa</taxon>
        <taxon>Chordata</taxon>
        <taxon>Craniata</taxon>
        <taxon>Vertebrata</taxon>
        <taxon>Euteleostomi</taxon>
        <taxon>Mammalia</taxon>
        <taxon>Eutheria</taxon>
        <taxon>Euarchontoglires</taxon>
        <taxon>Primates</taxon>
        <taxon>Haplorrhini</taxon>
        <taxon>Catarrhini</taxon>
        <taxon>Hominidae</taxon>
        <taxon>Pongo</taxon>
    </lineage>
</organism>
<accession>Q5RDJ7</accession>